<evidence type="ECO:0000250" key="1">
    <source>
        <dbReference type="UniProtKB" id="P10175"/>
    </source>
</evidence>
<evidence type="ECO:0000250" key="2">
    <source>
        <dbReference type="UniProtKB" id="P10176"/>
    </source>
</evidence>
<evidence type="ECO:0000305" key="3"/>
<reference key="1">
    <citation type="journal article" date="2002" name="Genomics">
        <title>Search for genes positively selected during primate evolution by 5'-end-sequence screening of cynomolgus monkey cDNAs.</title>
        <authorList>
            <person name="Osada N."/>
            <person name="Kusuda J."/>
            <person name="Hirata M."/>
            <person name="Tanuma R."/>
            <person name="Hida M."/>
            <person name="Sugano S."/>
            <person name="Hirai M."/>
            <person name="Hashimoto K."/>
        </authorList>
    </citation>
    <scope>NUCLEOTIDE SEQUENCE [GENOMIC DNA]</scope>
</reference>
<reference key="2">
    <citation type="journal article" date="2003" name="Proc. Natl. Acad. Sci. U.S.A.">
        <title>Adaptive evolution of cytochrome c oxidase subunit VIII in anthropoid primates.</title>
        <authorList>
            <person name="Goldberg A."/>
            <person name="Wildman D.E."/>
            <person name="Schmidt T.R."/>
            <person name="Huttemann M."/>
            <person name="Goodman M."/>
            <person name="Weiss M.L."/>
            <person name="Grossman L.I."/>
        </authorList>
    </citation>
    <scope>NUCLEOTIDE SEQUENCE [GENOMIC DNA]</scope>
</reference>
<feature type="transit peptide" description="Mitochondrion" evidence="2">
    <location>
        <begin position="1"/>
        <end position="25"/>
    </location>
</feature>
<feature type="chain" id="PRO_0000006185" description="Cytochrome c oxidase subunit 8A, mitochondrial">
    <location>
        <begin position="26"/>
        <end position="69"/>
    </location>
</feature>
<feature type="topological domain" description="Mitochondrial matrix" evidence="2">
    <location>
        <begin position="26"/>
        <end position="36"/>
    </location>
</feature>
<feature type="transmembrane region" description="Helical" evidence="1">
    <location>
        <begin position="37"/>
        <end position="60"/>
    </location>
</feature>
<feature type="topological domain" description="Mitochondrial intermembrane" evidence="2">
    <location>
        <begin position="61"/>
        <end position="69"/>
    </location>
</feature>
<feature type="short sequence motif" description="SIFI-degron" evidence="2">
    <location>
        <begin position="2"/>
        <end position="19"/>
    </location>
</feature>
<protein>
    <recommendedName>
        <fullName>Cytochrome c oxidase subunit 8A, mitochondrial</fullName>
    </recommendedName>
    <alternativeName>
        <fullName>Cytochrome c oxidase polypeptide VIII-liver</fullName>
    </alternativeName>
    <alternativeName>
        <fullName>Cytochrome c oxidase subunit 8-2</fullName>
    </alternativeName>
</protein>
<dbReference type="EMBL" id="AB072327">
    <property type="protein sequence ID" value="BAB86878.1"/>
    <property type="molecule type" value="Genomic_DNA"/>
</dbReference>
<dbReference type="EMBL" id="AY254810">
    <property type="protein sequence ID" value="AAP32244.1"/>
    <property type="molecule type" value="Genomic_DNA"/>
</dbReference>
<dbReference type="EMBL" id="AY254809">
    <property type="protein sequence ID" value="AAP32244.1"/>
    <property type="status" value="JOINED"/>
    <property type="molecule type" value="Genomic_DNA"/>
</dbReference>
<dbReference type="SMR" id="Q8SQ79"/>
<dbReference type="FunCoup" id="Q8SQ79">
    <property type="interactions" value="378"/>
</dbReference>
<dbReference type="STRING" id="9593.ENSGGOP00000006718"/>
<dbReference type="Ensembl" id="ENSGGOT00000006891.3">
    <property type="protein sequence ID" value="ENSGGOP00000006718.2"/>
    <property type="gene ID" value="ENSGGOG00000006870.3"/>
</dbReference>
<dbReference type="GeneID" id="101144277"/>
<dbReference type="KEGG" id="ggo:101144277"/>
<dbReference type="eggNOG" id="ENOG502SA62">
    <property type="taxonomic scope" value="Eukaryota"/>
</dbReference>
<dbReference type="GeneTree" id="ENSGT00390000006255"/>
<dbReference type="HOGENOM" id="CLU_203368_0_0_1"/>
<dbReference type="InParanoid" id="Q8SQ79"/>
<dbReference type="OMA" id="AQVHSMP"/>
<dbReference type="OrthoDB" id="2219at9604"/>
<dbReference type="UniPathway" id="UPA00705"/>
<dbReference type="Proteomes" id="UP000001519">
    <property type="component" value="Chromosome 11"/>
</dbReference>
<dbReference type="Bgee" id="ENSGGOG00000006870">
    <property type="expression patterns" value="Expressed in heart and 6 other cell types or tissues"/>
</dbReference>
<dbReference type="GO" id="GO:0005743">
    <property type="term" value="C:mitochondrial inner membrane"/>
    <property type="evidence" value="ECO:0007669"/>
    <property type="project" value="UniProtKB-SubCell"/>
</dbReference>
<dbReference type="GO" id="GO:0005739">
    <property type="term" value="C:mitochondrion"/>
    <property type="evidence" value="ECO:0000318"/>
    <property type="project" value="GO_Central"/>
</dbReference>
<dbReference type="GO" id="GO:0045277">
    <property type="term" value="C:respiratory chain complex IV"/>
    <property type="evidence" value="ECO:0000318"/>
    <property type="project" value="GO_Central"/>
</dbReference>
<dbReference type="GO" id="GO:0006123">
    <property type="term" value="P:mitochondrial electron transport, cytochrome c to oxygen"/>
    <property type="evidence" value="ECO:0007669"/>
    <property type="project" value="InterPro"/>
</dbReference>
<dbReference type="CDD" id="cd00930">
    <property type="entry name" value="Cyt_c_Oxidase_VIII"/>
    <property type="match status" value="1"/>
</dbReference>
<dbReference type="FunFam" id="4.10.81.10:FF:000001">
    <property type="entry name" value="Cytochrome c oxidase subunit 8B, mitochondrial"/>
    <property type="match status" value="1"/>
</dbReference>
<dbReference type="Gene3D" id="4.10.81.10">
    <property type="entry name" value="Cytochrome c oxidase, subunit 8"/>
    <property type="match status" value="1"/>
</dbReference>
<dbReference type="InterPro" id="IPR003205">
    <property type="entry name" value="Cyt_c_oxidase_su8"/>
</dbReference>
<dbReference type="InterPro" id="IPR036548">
    <property type="entry name" value="Cyt_c_oxidase_su8_sf"/>
</dbReference>
<dbReference type="PANTHER" id="PTHR16717">
    <property type="entry name" value="CYTOCHROME C OXIDASE POLYPEPTIDE VIII"/>
    <property type="match status" value="1"/>
</dbReference>
<dbReference type="PANTHER" id="PTHR16717:SF1">
    <property type="entry name" value="CYTOCHROME C OXIDASE SUBUNIT 8A, MITOCHONDRIAL"/>
    <property type="match status" value="1"/>
</dbReference>
<dbReference type="Pfam" id="PF02285">
    <property type="entry name" value="COX8"/>
    <property type="match status" value="1"/>
</dbReference>
<dbReference type="SUPFAM" id="SSF81431">
    <property type="entry name" value="Mitochondrial cytochrome c oxidase subunit VIIIb (aka IX)"/>
    <property type="match status" value="1"/>
</dbReference>
<accession>Q8SQ79</accession>
<keyword id="KW-0472">Membrane</keyword>
<keyword id="KW-0496">Mitochondrion</keyword>
<keyword id="KW-0999">Mitochondrion inner membrane</keyword>
<keyword id="KW-1185">Reference proteome</keyword>
<keyword id="KW-0809">Transit peptide</keyword>
<keyword id="KW-0812">Transmembrane</keyword>
<keyword id="KW-1133">Transmembrane helix</keyword>
<keyword id="KW-0832">Ubl conjugation</keyword>
<sequence>MSVLTPLLLRGLTGSARRLPVPRAKIHSLPPDEKLGIMELAVGLTSCFVTFLLPAGWILSHLETYRRPE</sequence>
<proteinExistence type="inferred from homology"/>
<gene>
    <name type="primary">COX8A</name>
    <name type="synonym">COX8</name>
    <name type="synonym">COX8L</name>
</gene>
<comment type="function">
    <text evidence="1">Component of the cytochrome c oxidase, the last enzyme in the mitochondrial electron transport chain which drives oxidative phosphorylation. The respiratory chain contains 3 multisubunit complexes succinate dehydrogenase (complex II, CII), ubiquinol-cytochrome c oxidoreductase (cytochrome b-c1 complex, complex III, CIII) and cytochrome c oxidase (complex IV, CIV), that cooperate to transfer electrons derived from NADH and succinate to molecular oxygen, creating an electrochemical gradient over the inner membrane that drives transmembrane transport and the ATP synthase. Cytochrome c oxidase is the component of the respiratory chain that catalyzes the reduction of oxygen to water. Electrons originating from reduced cytochrome c in the intermembrane space (IMS) are transferred via the dinuclear copper A center (CU(A)) of subunit 2 and heme A of subunit 1 to the active site in subunit 1, a binuclear center (BNC) formed by heme A3 and copper B (CU(B)). The BNC reduces molecular oxygen to 2 water molecules using 4 electrons from cytochrome c in the IMS and 4 protons from the mitochondrial matrix.</text>
</comment>
<comment type="pathway">
    <text evidence="1">Energy metabolism; oxidative phosphorylation.</text>
</comment>
<comment type="subunit">
    <text evidence="2">Component of the cytochrome c oxidase (complex IV, CIV), a multisubunit enzyme composed of 14 subunits. The complex is composed of a catalytic core of 3 subunits MT-CO1, MT-CO2 and MT-CO3, encoded in the mitochondrial DNA, and 11 supernumerary subunits COX4I, COX5A, COX5B, COX6A, COX6B, COX6C, COX7A, COX7B, COX7C, COX8 and NDUFA4, which are encoded in the nuclear genome. The complex exists as a monomer or a dimer and forms supercomplexes (SCs) in the inner mitochondrial membrane with NADH-ubiquinone oxidoreductase (complex I, CI) and ubiquinol-cytochrome c oxidoreductase (cytochrome b-c1 complex, complex III, CIII), resulting in different assemblies (supercomplex SCI(1)III(2)IV(1) and megacomplex MCI(2)III(2)IV(2)).</text>
</comment>
<comment type="subcellular location">
    <subcellularLocation>
        <location evidence="2">Mitochondrion inner membrane</location>
        <topology evidence="2">Single-pass membrane protein</topology>
    </subcellularLocation>
</comment>
<comment type="PTM">
    <text evidence="2">In response to mitochondrial stress, the precursor protein is ubiquitinated by the SIFI complex in the cytoplasm before mitochondrial import, leading to its degradation. Within the SIFI complex, UBR4 initiates ubiquitin chain that are further elongated or branched by KCMF1.</text>
</comment>
<comment type="similarity">
    <text evidence="3">Belongs to the cytochrome c oxidase VIII family.</text>
</comment>
<name>COX8A_GORGO</name>
<organism>
    <name type="scientific">Gorilla gorilla gorilla</name>
    <name type="common">Western lowland gorilla</name>
    <dbReference type="NCBI Taxonomy" id="9595"/>
    <lineage>
        <taxon>Eukaryota</taxon>
        <taxon>Metazoa</taxon>
        <taxon>Chordata</taxon>
        <taxon>Craniata</taxon>
        <taxon>Vertebrata</taxon>
        <taxon>Euteleostomi</taxon>
        <taxon>Mammalia</taxon>
        <taxon>Eutheria</taxon>
        <taxon>Euarchontoglires</taxon>
        <taxon>Primates</taxon>
        <taxon>Haplorrhini</taxon>
        <taxon>Catarrhini</taxon>
        <taxon>Hominidae</taxon>
        <taxon>Gorilla</taxon>
    </lineage>
</organism>